<dbReference type="EMBL" id="CP000947">
    <property type="protein sequence ID" value="ACA31169.1"/>
    <property type="molecule type" value="Genomic_DNA"/>
</dbReference>
<dbReference type="RefSeq" id="WP_012340570.1">
    <property type="nucleotide sequence ID" value="NC_010519.1"/>
</dbReference>
<dbReference type="SMR" id="B0UUE6"/>
<dbReference type="STRING" id="228400.HSM_1425"/>
<dbReference type="GeneID" id="31487723"/>
<dbReference type="KEGG" id="hsm:HSM_1425"/>
<dbReference type="HOGENOM" id="CLU_036856_0_1_6"/>
<dbReference type="GO" id="GO:0005737">
    <property type="term" value="C:cytoplasm"/>
    <property type="evidence" value="ECO:0007669"/>
    <property type="project" value="UniProtKB-SubCell"/>
</dbReference>
<dbReference type="GO" id="GO:0016149">
    <property type="term" value="F:translation release factor activity, codon specific"/>
    <property type="evidence" value="ECO:0007669"/>
    <property type="project" value="UniProtKB-UniRule"/>
</dbReference>
<dbReference type="FunFam" id="3.30.160.20:FF:000004">
    <property type="entry name" value="Peptide chain release factor 1"/>
    <property type="match status" value="1"/>
</dbReference>
<dbReference type="FunFam" id="3.30.70.1660:FF:000002">
    <property type="entry name" value="Peptide chain release factor 1"/>
    <property type="match status" value="1"/>
</dbReference>
<dbReference type="FunFam" id="3.30.70.1660:FF:000004">
    <property type="entry name" value="Peptide chain release factor 1"/>
    <property type="match status" value="1"/>
</dbReference>
<dbReference type="Gene3D" id="3.30.160.20">
    <property type="match status" value="1"/>
</dbReference>
<dbReference type="Gene3D" id="3.30.70.1660">
    <property type="match status" value="1"/>
</dbReference>
<dbReference type="Gene3D" id="6.10.140.1950">
    <property type="match status" value="1"/>
</dbReference>
<dbReference type="HAMAP" id="MF_00093">
    <property type="entry name" value="Rel_fac_1"/>
    <property type="match status" value="1"/>
</dbReference>
<dbReference type="InterPro" id="IPR005139">
    <property type="entry name" value="PCRF"/>
</dbReference>
<dbReference type="InterPro" id="IPR000352">
    <property type="entry name" value="Pep_chain_release_fac_I"/>
</dbReference>
<dbReference type="InterPro" id="IPR045853">
    <property type="entry name" value="Pep_chain_release_fac_I_sf"/>
</dbReference>
<dbReference type="InterPro" id="IPR050057">
    <property type="entry name" value="Prokaryotic/Mito_RF"/>
</dbReference>
<dbReference type="InterPro" id="IPR004373">
    <property type="entry name" value="RF-1"/>
</dbReference>
<dbReference type="NCBIfam" id="TIGR00019">
    <property type="entry name" value="prfA"/>
    <property type="match status" value="1"/>
</dbReference>
<dbReference type="NCBIfam" id="NF001859">
    <property type="entry name" value="PRK00591.1"/>
    <property type="match status" value="1"/>
</dbReference>
<dbReference type="PANTHER" id="PTHR43804">
    <property type="entry name" value="LD18447P"/>
    <property type="match status" value="1"/>
</dbReference>
<dbReference type="PANTHER" id="PTHR43804:SF7">
    <property type="entry name" value="LD18447P"/>
    <property type="match status" value="1"/>
</dbReference>
<dbReference type="Pfam" id="PF03462">
    <property type="entry name" value="PCRF"/>
    <property type="match status" value="1"/>
</dbReference>
<dbReference type="Pfam" id="PF00472">
    <property type="entry name" value="RF-1"/>
    <property type="match status" value="1"/>
</dbReference>
<dbReference type="SMART" id="SM00937">
    <property type="entry name" value="PCRF"/>
    <property type="match status" value="1"/>
</dbReference>
<dbReference type="SUPFAM" id="SSF75620">
    <property type="entry name" value="Release factor"/>
    <property type="match status" value="1"/>
</dbReference>
<dbReference type="PROSITE" id="PS00745">
    <property type="entry name" value="RF_PROK_I"/>
    <property type="match status" value="1"/>
</dbReference>
<reference key="1">
    <citation type="submission" date="2008-02" db="EMBL/GenBank/DDBJ databases">
        <title>Complete sequence of Haemophilus somnus 2336.</title>
        <authorList>
            <consortium name="US DOE Joint Genome Institute"/>
            <person name="Siddaramappa S."/>
            <person name="Duncan A.J."/>
            <person name="Challacombe J.F."/>
            <person name="Rainey D."/>
            <person name="Gillaspy A.F."/>
            <person name="Carson M."/>
            <person name="Gipson J."/>
            <person name="Gipson M."/>
            <person name="Bruce D."/>
            <person name="Detter J.C."/>
            <person name="Han C.S."/>
            <person name="Land M."/>
            <person name="Tapia R."/>
            <person name="Thompson L.S."/>
            <person name="Orvis J."/>
            <person name="Zaitshik J."/>
            <person name="Barnes G."/>
            <person name="Brettin T.S."/>
            <person name="Dyer D.W."/>
            <person name="Inzana T.J."/>
        </authorList>
    </citation>
    <scope>NUCLEOTIDE SEQUENCE [LARGE SCALE GENOMIC DNA]</scope>
    <source>
        <strain>2336</strain>
    </source>
</reference>
<feature type="chain" id="PRO_1000075500" description="Peptide chain release factor 1">
    <location>
        <begin position="1"/>
        <end position="360"/>
    </location>
</feature>
<feature type="region of interest" description="Disordered" evidence="2">
    <location>
        <begin position="286"/>
        <end position="311"/>
    </location>
</feature>
<feature type="modified residue" description="N5-methylglutamine" evidence="1">
    <location>
        <position position="235"/>
    </location>
</feature>
<name>RF1_HISS2</name>
<proteinExistence type="inferred from homology"/>
<protein>
    <recommendedName>
        <fullName evidence="1">Peptide chain release factor 1</fullName>
        <shortName evidence="1">RF-1</shortName>
    </recommendedName>
</protein>
<accession>B0UUE6</accession>
<evidence type="ECO:0000255" key="1">
    <source>
        <dbReference type="HAMAP-Rule" id="MF_00093"/>
    </source>
</evidence>
<evidence type="ECO:0000256" key="2">
    <source>
        <dbReference type="SAM" id="MobiDB-lite"/>
    </source>
</evidence>
<organism>
    <name type="scientific">Histophilus somni (strain 2336)</name>
    <name type="common">Haemophilus somnus</name>
    <dbReference type="NCBI Taxonomy" id="228400"/>
    <lineage>
        <taxon>Bacteria</taxon>
        <taxon>Pseudomonadati</taxon>
        <taxon>Pseudomonadota</taxon>
        <taxon>Gammaproteobacteria</taxon>
        <taxon>Pasteurellales</taxon>
        <taxon>Pasteurellaceae</taxon>
        <taxon>Histophilus</taxon>
    </lineage>
</organism>
<comment type="function">
    <text evidence="1">Peptide chain release factor 1 directs the termination of translation in response to the peptide chain termination codons UAG and UAA.</text>
</comment>
<comment type="subcellular location">
    <subcellularLocation>
        <location evidence="1">Cytoplasm</location>
    </subcellularLocation>
</comment>
<comment type="PTM">
    <text evidence="1">Methylated by PrmC. Methylation increases the termination efficiency of RF1.</text>
</comment>
<comment type="similarity">
    <text evidence="1">Belongs to the prokaryotic/mitochondrial release factor family.</text>
</comment>
<keyword id="KW-0963">Cytoplasm</keyword>
<keyword id="KW-0488">Methylation</keyword>
<keyword id="KW-0648">Protein biosynthesis</keyword>
<sequence>MKASIISKLESLKERHEELEALLGESSVINDQDKFRAYSKEYAQLEDVVKCFARWNWLNNNIEETQLLLDDPDMKEMAELEIEESKAEIENAEQQLQILLLPKDPNDEYNAYLEIRAGTGGDEAGIFAGDLFRMYSRYAESKRWRVEVLNANESEQGGYKEIIVKVNGEGVYGQLKFESGGHRVQRVPKTESQGRIHTSACTVAVMPELPENEMPEINPSDLRIDTYRSSGAGGQHVNTTDSAVRITHIPTGIVVECQDERSQHKNKAKALSVLASRIAQAEQERQAQAQADTRRNLLGSGDRSDKIRTYNYPQGRVTDHRINLTVYRLDEVMNGKIDELIQPIITEYQADQLAMLSEQN</sequence>
<gene>
    <name evidence="1" type="primary">prfA</name>
    <name type="ordered locus">HSM_1425</name>
</gene>